<evidence type="ECO:0000250" key="1"/>
<evidence type="ECO:0000305" key="2"/>
<name>Y3895_MYCTU</name>
<protein>
    <recommendedName>
        <fullName>Putative S-adenosyl-L-methionine-dependent methyltransferase Rv3787c</fullName>
        <ecNumber>2.1.1.-</ecNumber>
    </recommendedName>
</protein>
<organism>
    <name type="scientific">Mycobacterium tuberculosis (strain ATCC 25618 / H37Rv)</name>
    <dbReference type="NCBI Taxonomy" id="83332"/>
    <lineage>
        <taxon>Bacteria</taxon>
        <taxon>Bacillati</taxon>
        <taxon>Actinomycetota</taxon>
        <taxon>Actinomycetes</taxon>
        <taxon>Mycobacteriales</taxon>
        <taxon>Mycobacteriaceae</taxon>
        <taxon>Mycobacterium</taxon>
        <taxon>Mycobacterium tuberculosis complex</taxon>
    </lineage>
</organism>
<gene>
    <name type="ordered locus">Rv3787c</name>
</gene>
<sequence length="308" mass="33390">MARTDDDSWDLATGVGATATLVAAGRARAARAAQPLIDDPFAEPLVRAVGVEFLTRWATGELDAADVDDPDAAWGLQRMTTELVVRTRYFDQFFLDAAAAGVRQAVILASGLDARGYRLPWPADTTVFEVDQPRVLEFKAQTLAGLGAQPTADLRMVPADLRHDWPDALRRGGFDAAEPAAWIAEGLFGYLPPDAQNRLLDHVTDLSAPGSRLALEAFLGSADRDSARVEEMIRTATRGWREHGFHLDIWALNYAGPRHEVSGYLDNHGWRSVGTTTAQLLAAHDLPAAPALPAGLADRPNYWTCVLG</sequence>
<feature type="chain" id="PRO_0000361241" description="Putative S-adenosyl-L-methionine-dependent methyltransferase Rv3787c">
    <location>
        <begin position="1"/>
        <end position="308"/>
    </location>
</feature>
<feature type="binding site" evidence="1">
    <location>
        <position position="131"/>
    </location>
    <ligand>
        <name>S-adenosyl-L-methionine</name>
        <dbReference type="ChEBI" id="CHEBI:59789"/>
    </ligand>
</feature>
<feature type="binding site" evidence="1">
    <location>
        <begin position="160"/>
        <end position="161"/>
    </location>
    <ligand>
        <name>S-adenosyl-L-methionine</name>
        <dbReference type="ChEBI" id="CHEBI:59789"/>
    </ligand>
</feature>
<dbReference type="EC" id="2.1.1.-"/>
<dbReference type="EMBL" id="AL123456">
    <property type="protein sequence ID" value="CCP46616.1"/>
    <property type="molecule type" value="Genomic_DNA"/>
</dbReference>
<dbReference type="PIR" id="G70696">
    <property type="entry name" value="G70696"/>
</dbReference>
<dbReference type="RefSeq" id="NP_218304.1">
    <property type="nucleotide sequence ID" value="NC_000962.3"/>
</dbReference>
<dbReference type="RefSeq" id="WP_003420620.1">
    <property type="nucleotide sequence ID" value="NZ_NVQJ01000009.1"/>
</dbReference>
<dbReference type="SMR" id="P9WFH3"/>
<dbReference type="STRING" id="83332.Rv3787c"/>
<dbReference type="PaxDb" id="83332-Rv3787c"/>
<dbReference type="DNASU" id="886118"/>
<dbReference type="GeneID" id="886118"/>
<dbReference type="KEGG" id="mtu:Rv3787c"/>
<dbReference type="KEGG" id="mtv:RVBD_3787c"/>
<dbReference type="TubercuList" id="Rv3787c"/>
<dbReference type="eggNOG" id="COG3315">
    <property type="taxonomic scope" value="Bacteria"/>
</dbReference>
<dbReference type="InParanoid" id="P9WFH3"/>
<dbReference type="OrthoDB" id="9806164at2"/>
<dbReference type="PhylomeDB" id="P9WFH3"/>
<dbReference type="Proteomes" id="UP000001584">
    <property type="component" value="Chromosome"/>
</dbReference>
<dbReference type="GO" id="GO:0008168">
    <property type="term" value="F:methyltransferase activity"/>
    <property type="evidence" value="ECO:0007669"/>
    <property type="project" value="UniProtKB-KW"/>
</dbReference>
<dbReference type="GO" id="GO:0032259">
    <property type="term" value="P:methylation"/>
    <property type="evidence" value="ECO:0007669"/>
    <property type="project" value="UniProtKB-KW"/>
</dbReference>
<dbReference type="Gene3D" id="3.40.50.150">
    <property type="entry name" value="Vaccinia Virus protein VP39"/>
    <property type="match status" value="1"/>
</dbReference>
<dbReference type="InterPro" id="IPR007213">
    <property type="entry name" value="Ppm1/Ppm2/Tcmp"/>
</dbReference>
<dbReference type="InterPro" id="IPR029063">
    <property type="entry name" value="SAM-dependent_MTases_sf"/>
</dbReference>
<dbReference type="InterPro" id="IPR011610">
    <property type="entry name" value="SAM_mthyl_Trfase_ML2640-like"/>
</dbReference>
<dbReference type="NCBIfam" id="TIGR00027">
    <property type="entry name" value="mthyl_TIGR00027"/>
    <property type="match status" value="1"/>
</dbReference>
<dbReference type="PANTHER" id="PTHR43619">
    <property type="entry name" value="S-ADENOSYL-L-METHIONINE-DEPENDENT METHYLTRANSFERASE YKTD-RELATED"/>
    <property type="match status" value="1"/>
</dbReference>
<dbReference type="PANTHER" id="PTHR43619:SF2">
    <property type="entry name" value="S-ADENOSYL-L-METHIONINE-DEPENDENT METHYLTRANSFERASES SUPERFAMILY PROTEIN"/>
    <property type="match status" value="1"/>
</dbReference>
<dbReference type="Pfam" id="PF04072">
    <property type="entry name" value="LCM"/>
    <property type="match status" value="1"/>
</dbReference>
<dbReference type="SUPFAM" id="SSF53335">
    <property type="entry name" value="S-adenosyl-L-methionine-dependent methyltransferases"/>
    <property type="match status" value="1"/>
</dbReference>
<accession>P9WFH3</accession>
<accession>L0TGK0</accession>
<accession>P72053</accession>
<accession>Q7D4V4</accession>
<comment type="function">
    <text evidence="1">Exhibits S-adenosyl-L-methionine-dependent methyltransferase activity.</text>
</comment>
<comment type="similarity">
    <text evidence="2">Belongs to the UPF0677 family.</text>
</comment>
<proteinExistence type="evidence at protein level"/>
<keyword id="KW-0489">Methyltransferase</keyword>
<keyword id="KW-1185">Reference proteome</keyword>
<keyword id="KW-0949">S-adenosyl-L-methionine</keyword>
<keyword id="KW-0808">Transferase</keyword>
<reference key="1">
    <citation type="journal article" date="1998" name="Nature">
        <title>Deciphering the biology of Mycobacterium tuberculosis from the complete genome sequence.</title>
        <authorList>
            <person name="Cole S.T."/>
            <person name="Brosch R."/>
            <person name="Parkhill J."/>
            <person name="Garnier T."/>
            <person name="Churcher C.M."/>
            <person name="Harris D.E."/>
            <person name="Gordon S.V."/>
            <person name="Eiglmeier K."/>
            <person name="Gas S."/>
            <person name="Barry C.E. III"/>
            <person name="Tekaia F."/>
            <person name="Badcock K."/>
            <person name="Basham D."/>
            <person name="Brown D."/>
            <person name="Chillingworth T."/>
            <person name="Connor R."/>
            <person name="Davies R.M."/>
            <person name="Devlin K."/>
            <person name="Feltwell T."/>
            <person name="Gentles S."/>
            <person name="Hamlin N."/>
            <person name="Holroyd S."/>
            <person name="Hornsby T."/>
            <person name="Jagels K."/>
            <person name="Krogh A."/>
            <person name="McLean J."/>
            <person name="Moule S."/>
            <person name="Murphy L.D."/>
            <person name="Oliver S."/>
            <person name="Osborne J."/>
            <person name="Quail M.A."/>
            <person name="Rajandream M.A."/>
            <person name="Rogers J."/>
            <person name="Rutter S."/>
            <person name="Seeger K."/>
            <person name="Skelton S."/>
            <person name="Squares S."/>
            <person name="Squares R."/>
            <person name="Sulston J.E."/>
            <person name="Taylor K."/>
            <person name="Whitehead S."/>
            <person name="Barrell B.G."/>
        </authorList>
    </citation>
    <scope>NUCLEOTIDE SEQUENCE [LARGE SCALE GENOMIC DNA]</scope>
    <source>
        <strain>ATCC 25618 / H37Rv</strain>
    </source>
</reference>
<reference key="2">
    <citation type="journal article" date="2011" name="Mol. Cell. Proteomics">
        <title>Proteogenomic analysis of Mycobacterium tuberculosis by high resolution mass spectrometry.</title>
        <authorList>
            <person name="Kelkar D.S."/>
            <person name="Kumar D."/>
            <person name="Kumar P."/>
            <person name="Balakrishnan L."/>
            <person name="Muthusamy B."/>
            <person name="Yadav A.K."/>
            <person name="Shrivastava P."/>
            <person name="Marimuthu A."/>
            <person name="Anand S."/>
            <person name="Sundaram H."/>
            <person name="Kingsbury R."/>
            <person name="Harsha H.C."/>
            <person name="Nair B."/>
            <person name="Prasad T.S."/>
            <person name="Chauhan D.S."/>
            <person name="Katoch K."/>
            <person name="Katoch V.M."/>
            <person name="Kumar P."/>
            <person name="Chaerkady R."/>
            <person name="Ramachandran S."/>
            <person name="Dash D."/>
            <person name="Pandey A."/>
        </authorList>
    </citation>
    <scope>IDENTIFICATION BY MASS SPECTROMETRY [LARGE SCALE ANALYSIS]</scope>
    <source>
        <strain>ATCC 25618 / H37Rv</strain>
    </source>
</reference>